<evidence type="ECO:0000250" key="1"/>
<evidence type="ECO:0000255" key="2"/>
<evidence type="ECO:0000305" key="3"/>
<name>HEMA_INCKY</name>
<organism>
    <name type="scientific">Influenza C virus (strain C/Kyoto/41/1982)</name>
    <dbReference type="NCBI Taxonomy" id="203233"/>
    <lineage>
        <taxon>Viruses</taxon>
        <taxon>Riboviria</taxon>
        <taxon>Orthornavirae</taxon>
        <taxon>Negarnaviricota</taxon>
        <taxon>Polyploviricotina</taxon>
        <taxon>Insthoviricetes</taxon>
        <taxon>Articulavirales</taxon>
        <taxon>Orthomyxoviridae</taxon>
        <taxon>Gammainfluenzavirus</taxon>
        <taxon>Gammainfluenzavirus influenzae</taxon>
        <taxon>Influenza C virus</taxon>
    </lineage>
</organism>
<reference key="1">
    <citation type="journal article" date="1989" name="Virology">
        <title>Antigenic and genetic characterization of three influenza C strains isolated in the Kinki district of Japan in 1982-1983.</title>
        <authorList>
            <person name="Adachi K."/>
            <person name="Kitame F."/>
            <person name="Sugawara K."/>
            <person name="Nishimura H."/>
            <person name="Nakamura K."/>
        </authorList>
    </citation>
    <scope>NUCLEOTIDE SEQUENCE [GENOMIC RNA]</scope>
</reference>
<gene>
    <name type="primary">HE</name>
</gene>
<sequence length="641" mass="70560">EKIKICLQKQVNSSFSLHNGFGGNLYATEEKRMFELVKPKAGASVLNQSTWIGFGDSRTDKSNPNFPRSADVSVKTANKFRSLTGGSLMLSMFGPPGKVDYLYQGCGKHKVFYEGVNWSPHAAIDCYRKNWTDIKLNFQKNIYELASQSHCMSLVNALDKTIPLQATAGVAGNCNNSFLKNPALYTQKVTPPXXKCGKENLAFFTLPTQFGTYECRLHLVASCYFIYDSKEVYNKRGCDNYFQVIYDSSGKVVGGLDNRVSPYTGNSGDTPTMQCDMIQLKPGRYSVRSSPRFLLMPERSYCFDMKEKGPVTAVQSIWGKDRKSDYAVDQACLSTPGCMLIQKQKPYTGEADDHHGDQEMRELLSGLDYEARCISQSGWVNETSPFTEEYLLPPKFGRCPLAAKEESIPKIPDGLLIPTSGTDTTVTKPKSRIFGIDDLIIGLLFVAIVEAGIGGYLLGSRKESGGGVTKESAEKGFEKIGNDIQILRSSTNIAIEKLNDRISHDEQAIRDLTLEIENARSEALLGELGIIRALLVGNISIGLQESLWELASEITNRAGDLAVEISPGCWIIDNNICDQSCQNFIFKFNETAPVPTIPPLDTKIDLQSDPFYWGSSLGLAITAAISLAALVISGIAICRTK</sequence>
<dbReference type="EC" id="3.1.1.53"/>
<dbReference type="EMBL" id="M25361">
    <property type="protein sequence ID" value="AAA43789.1"/>
    <property type="molecule type" value="Genomic_RNA"/>
</dbReference>
<dbReference type="PIR" id="A32665">
    <property type="entry name" value="HMIVEA"/>
</dbReference>
<dbReference type="GlyCosmos" id="P17004">
    <property type="glycosylation" value="4 sites, No reported glycans"/>
</dbReference>
<dbReference type="GO" id="GO:0020002">
    <property type="term" value="C:host cell plasma membrane"/>
    <property type="evidence" value="ECO:0007669"/>
    <property type="project" value="UniProtKB-SubCell"/>
</dbReference>
<dbReference type="GO" id="GO:0016020">
    <property type="term" value="C:membrane"/>
    <property type="evidence" value="ECO:0007669"/>
    <property type="project" value="UniProtKB-KW"/>
</dbReference>
<dbReference type="GO" id="GO:0019031">
    <property type="term" value="C:viral envelope"/>
    <property type="evidence" value="ECO:0007669"/>
    <property type="project" value="UniProtKB-KW"/>
</dbReference>
<dbReference type="GO" id="GO:0055036">
    <property type="term" value="C:virion membrane"/>
    <property type="evidence" value="ECO:0007669"/>
    <property type="project" value="UniProtKB-SubCell"/>
</dbReference>
<dbReference type="GO" id="GO:0046789">
    <property type="term" value="F:host cell surface receptor binding"/>
    <property type="evidence" value="ECO:0007669"/>
    <property type="project" value="InterPro"/>
</dbReference>
<dbReference type="GO" id="GO:0106331">
    <property type="term" value="F:sialate 4-O-acetylesterase activity"/>
    <property type="evidence" value="ECO:0007669"/>
    <property type="project" value="RHEA"/>
</dbReference>
<dbReference type="GO" id="GO:0106330">
    <property type="term" value="F:sialate 9-O-acetylesterase activity"/>
    <property type="evidence" value="ECO:0007669"/>
    <property type="project" value="RHEA"/>
</dbReference>
<dbReference type="GO" id="GO:0039654">
    <property type="term" value="P:fusion of virus membrane with host endosome membrane"/>
    <property type="evidence" value="ECO:0007669"/>
    <property type="project" value="UniProtKB-KW"/>
</dbReference>
<dbReference type="GO" id="GO:0019064">
    <property type="term" value="P:fusion of virus membrane with host plasma membrane"/>
    <property type="evidence" value="ECO:0007669"/>
    <property type="project" value="InterPro"/>
</dbReference>
<dbReference type="GO" id="GO:0046718">
    <property type="term" value="P:symbiont entry into host cell"/>
    <property type="evidence" value="ECO:0007669"/>
    <property type="project" value="UniProtKB-KW"/>
</dbReference>
<dbReference type="GO" id="GO:0019062">
    <property type="term" value="P:virion attachment to host cell"/>
    <property type="evidence" value="ECO:0007669"/>
    <property type="project" value="UniProtKB-KW"/>
</dbReference>
<dbReference type="Gene3D" id="2.20.70.20">
    <property type="match status" value="2"/>
</dbReference>
<dbReference type="Gene3D" id="3.90.20.10">
    <property type="match status" value="1"/>
</dbReference>
<dbReference type="InterPro" id="IPR008980">
    <property type="entry name" value="Capsid_hemagglutn"/>
</dbReference>
<dbReference type="InterPro" id="IPR007142">
    <property type="entry name" value="Hemagglutn-estrase_core"/>
</dbReference>
<dbReference type="InterPro" id="IPR003860">
    <property type="entry name" value="Hemagglutn-estrase_hemagglutn"/>
</dbReference>
<dbReference type="InterPro" id="IPR014831">
    <property type="entry name" value="Hemagglutn_stalk_influenz-C"/>
</dbReference>
<dbReference type="Pfam" id="PF03996">
    <property type="entry name" value="Hema_esterase"/>
    <property type="match status" value="1"/>
</dbReference>
<dbReference type="Pfam" id="PF02710">
    <property type="entry name" value="Hema_HEFG"/>
    <property type="match status" value="1"/>
</dbReference>
<dbReference type="Pfam" id="PF08720">
    <property type="entry name" value="Hema_stalk"/>
    <property type="match status" value="1"/>
</dbReference>
<dbReference type="SUPFAM" id="SSF58064">
    <property type="entry name" value="Influenza hemagglutinin (stalk)"/>
    <property type="match status" value="1"/>
</dbReference>
<dbReference type="SUPFAM" id="SSF52266">
    <property type="entry name" value="SGNH hydrolase"/>
    <property type="match status" value="1"/>
</dbReference>
<dbReference type="SUPFAM" id="SSF49818">
    <property type="entry name" value="Viral protein domain"/>
    <property type="match status" value="1"/>
</dbReference>
<organismHost>
    <name type="scientific">Homo sapiens</name>
    <name type="common">Human</name>
    <dbReference type="NCBI Taxonomy" id="9606"/>
</organismHost>
<organismHost>
    <name type="scientific">Sus scrofa</name>
    <name type="common">Pig</name>
    <dbReference type="NCBI Taxonomy" id="9823"/>
</organismHost>
<keyword id="KW-1015">Disulfide bond</keyword>
<keyword id="KW-1170">Fusion of virus membrane with host endosomal membrane</keyword>
<keyword id="KW-1168">Fusion of virus membrane with host membrane</keyword>
<keyword id="KW-0325">Glycoprotein</keyword>
<keyword id="KW-0348">Hemagglutinin</keyword>
<keyword id="KW-1032">Host cell membrane</keyword>
<keyword id="KW-1043">Host membrane</keyword>
<keyword id="KW-0945">Host-virus interaction</keyword>
<keyword id="KW-0378">Hydrolase</keyword>
<keyword id="KW-0472">Membrane</keyword>
<keyword id="KW-0812">Transmembrane</keyword>
<keyword id="KW-1133">Transmembrane helix</keyword>
<keyword id="KW-1161">Viral attachment to host cell</keyword>
<keyword id="KW-0261">Viral envelope protein</keyword>
<keyword id="KW-1162">Viral penetration into host cytoplasm</keyword>
<keyword id="KW-0946">Virion</keyword>
<keyword id="KW-1160">Virus entry into host cell</keyword>
<accession>P17004</accession>
<comment type="function">
    <text evidence="1">Binds to the N-acetyl-9-O-acetylneuraminic acid residues on the cell surface, bringing about the attachment of the virus particle to the cell. Plays a major role in the determination of host range restriction and virulence. Class I viral fusion protein. Responsible for penetration of the virus into the cell cytoplasm by mediating the fusion of the membrane of the endocytosed virus particle with the endosomal membrane. Low pH in endosomes induce an irreversible conformational change in HEF2, releasing the fusion hydrophobic peptide. Several trimers are required to form a competent fusion pore. Displays a receptor-destroying activity which is a neuraminidate-O-acetyl esterase. This activity cleaves off any receptor on the cell surface, which would otherwise prevent virions release. These cleavages prevent self-aggregation and ensure the efficient spread of the progeny virus from cell to cell (By similarity).</text>
</comment>
<comment type="catalytic activity">
    <reaction>
        <text>N-acetyl-9-O-acetylneuraminate + H2O = N-acetylneuraminate + acetate + H(+)</text>
        <dbReference type="Rhea" id="RHEA:22600"/>
        <dbReference type="ChEBI" id="CHEBI:15377"/>
        <dbReference type="ChEBI" id="CHEBI:15378"/>
        <dbReference type="ChEBI" id="CHEBI:28999"/>
        <dbReference type="ChEBI" id="CHEBI:30089"/>
        <dbReference type="ChEBI" id="CHEBI:35418"/>
        <dbReference type="EC" id="3.1.1.53"/>
    </reaction>
</comment>
<comment type="catalytic activity">
    <reaction>
        <text>N-acetyl-4-O-acetylneuraminate + H2O = N-acetylneuraminate + acetate + H(+)</text>
        <dbReference type="Rhea" id="RHEA:25564"/>
        <dbReference type="ChEBI" id="CHEBI:15377"/>
        <dbReference type="ChEBI" id="CHEBI:15378"/>
        <dbReference type="ChEBI" id="CHEBI:29006"/>
        <dbReference type="ChEBI" id="CHEBI:30089"/>
        <dbReference type="ChEBI" id="CHEBI:35418"/>
        <dbReference type="EC" id="3.1.1.53"/>
    </reaction>
</comment>
<comment type="subunit">
    <text evidence="1">Homotrimer of disulfide-linked HEF1-HEF2.</text>
</comment>
<comment type="subcellular location">
    <subcellularLocation>
        <location evidence="3">Virion membrane</location>
        <topology evidence="3">Single-pass type I membrane protein</topology>
    </subcellularLocation>
    <subcellularLocation>
        <location evidence="1">Host cell membrane</location>
        <topology evidence="1">Single-pass type I membrane protein</topology>
    </subcellularLocation>
</comment>
<comment type="PTM">
    <text evidence="1">In natural infection, inactive HEF is matured into HEF1 and HEF2 outside the cell by one or more trypsin-like, arginine-specific endoprotease.</text>
</comment>
<comment type="similarity">
    <text evidence="3">Belongs to the influenza type C/coronaviruses hemagglutinin-esterase family.</text>
</comment>
<feature type="chain" id="PRO_0000039154" description="Hemagglutinin-esterase-fusion glycoprotein chain 1">
    <location>
        <begin position="1"/>
        <end position="432"/>
    </location>
</feature>
<feature type="chain" id="PRO_0000039155" description="Hemagglutinin-esterase-fusion glycoprotein chain 2">
    <location>
        <begin position="433"/>
        <end position="641"/>
    </location>
</feature>
<feature type="topological domain" description="Extracellular" evidence="2">
    <location>
        <begin position="1"/>
        <end position="616"/>
    </location>
</feature>
<feature type="transmembrane region" description="Helical" evidence="2">
    <location>
        <begin position="617"/>
        <end position="637"/>
    </location>
</feature>
<feature type="topological domain" description="Cytoplasmic" evidence="2">
    <location>
        <begin position="638"/>
        <end position="641"/>
    </location>
</feature>
<feature type="region of interest" description="Fusion domain-1" evidence="1">
    <location>
        <begin position="1"/>
        <end position="26"/>
    </location>
</feature>
<feature type="region of interest" description="Esterase domain-1" evidence="1">
    <location>
        <begin position="27"/>
        <end position="137"/>
    </location>
</feature>
<feature type="region of interest" description="N-acetyl-9-O-acetylneuraminic acid binding" evidence="1">
    <location>
        <begin position="137"/>
        <end position="296"/>
    </location>
</feature>
<feature type="region of interest" description="Esterase domain-2" evidence="1">
    <location>
        <begin position="297"/>
        <end position="351"/>
    </location>
</feature>
<feature type="region of interest" description="Fusion domain-2" evidence="1">
    <location>
        <begin position="352"/>
        <end position="637"/>
    </location>
</feature>
<feature type="active site" description="Nucleophile" evidence="1">
    <location>
        <position position="57"/>
    </location>
</feature>
<feature type="active site" description="Charge relay system" evidence="1">
    <location>
        <position position="352"/>
    </location>
</feature>
<feature type="active site" description="Charge relay system" evidence="1">
    <location>
        <position position="355"/>
    </location>
</feature>
<feature type="glycosylation site" description="N-linked (GlcNAc...) asparagine; by host" evidence="2">
    <location>
        <position position="12"/>
    </location>
</feature>
<feature type="glycosylation site" description="N-linked (GlcNAc...) asparagine; by host" evidence="2">
    <location>
        <position position="47"/>
    </location>
</feature>
<feature type="glycosylation site" description="N-linked (GlcNAc...) asparagine; by host" evidence="2">
    <location>
        <position position="130"/>
    </location>
</feature>
<feature type="glycosylation site" description="N-linked (GlcNAc...) asparagine; by host" evidence="2">
    <location>
        <position position="381"/>
    </location>
</feature>
<feature type="disulfide bond" description="Interchain (between HEF1 and HEF2 chains)" evidence="1">
    <location>
        <begin position="6"/>
        <end position="569"/>
    </location>
</feature>
<feature type="disulfide bond" evidence="1">
    <location>
        <begin position="106"/>
        <end position="151"/>
    </location>
</feature>
<feature type="disulfide bond" evidence="1">
    <location>
        <begin position="126"/>
        <end position="174"/>
    </location>
</feature>
<feature type="disulfide bond" evidence="1">
    <location>
        <begin position="196"/>
        <end position="238"/>
    </location>
</feature>
<feature type="disulfide bond" evidence="1">
    <location>
        <begin position="215"/>
        <end position="302"/>
    </location>
</feature>
<feature type="disulfide bond" evidence="1">
    <location>
        <begin position="223"/>
        <end position="275"/>
    </location>
</feature>
<feature type="disulfide bond" evidence="1">
    <location>
        <begin position="332"/>
        <end position="338"/>
    </location>
</feature>
<feature type="non-terminal residue">
    <location>
        <position position="1"/>
    </location>
</feature>
<proteinExistence type="inferred from homology"/>
<protein>
    <recommendedName>
        <fullName>Hemagglutinin-esterase-fusion glycoprotein</fullName>
        <shortName>HEF</shortName>
        <ecNumber>3.1.1.53</ecNumber>
    </recommendedName>
    <component>
        <recommendedName>
            <fullName>Hemagglutinin-esterase-fusion glycoprotein chain 1</fullName>
            <shortName>HEF1</shortName>
        </recommendedName>
    </component>
    <component>
        <recommendedName>
            <fullName>Hemagglutinin-esterase-fusion glycoprotein chain 2</fullName>
            <shortName>HEF2</shortName>
        </recommendedName>
    </component>
</protein>